<protein>
    <recommendedName>
        <fullName evidence="5">Olfactory receptor 8G3</fullName>
    </recommendedName>
    <alternativeName>
        <fullName evidence="3">Olfactory receptor OR11-297</fullName>
    </alternativeName>
</protein>
<proteinExistence type="inferred from homology"/>
<sequence>MDPGNHSSVTESILAGLSEQPELQLRLFLLFLGICVVTVVGNLGMITLIGLSSHLHTPMYYFLSSLSFIDFCHSTVITPKMLVNFATEKNIISYPECMAQLYLFSIFAIAECHMLAAMAYDCYVAICSPLLYNVIMSYHHCFWLTVGVYILGILGSTIHTSFMLRLFLCKTNVINHYFCDLFPLLGLSCSSTYINELLVLVLSAFNILMPALTILASYIFIIASILRIHSTEGRSKAFSTCSSHILAVAVFFGSAAFMYLQPSSVSSMDQRKVSSVFYTTIVPMLNPLIYSLRNKDVKLAVKKILHQTAC</sequence>
<name>OR8G3_HUMAN</name>
<gene>
    <name evidence="5" type="primary">OR8G3</name>
    <name evidence="5" type="synonym">OR8G3P</name>
</gene>
<organism>
    <name type="scientific">Homo sapiens</name>
    <name type="common">Human</name>
    <dbReference type="NCBI Taxonomy" id="9606"/>
    <lineage>
        <taxon>Eukaryota</taxon>
        <taxon>Metazoa</taxon>
        <taxon>Chordata</taxon>
        <taxon>Craniata</taxon>
        <taxon>Vertebrata</taxon>
        <taxon>Euteleostomi</taxon>
        <taxon>Mammalia</taxon>
        <taxon>Eutheria</taxon>
        <taxon>Euarchontoglires</taxon>
        <taxon>Primates</taxon>
        <taxon>Haplorrhini</taxon>
        <taxon>Catarrhini</taxon>
        <taxon>Hominidae</taxon>
        <taxon>Homo</taxon>
    </lineage>
</organism>
<comment type="function">
    <text evidence="4">Odorant receptor.</text>
</comment>
<comment type="subcellular location">
    <subcellularLocation>
        <location evidence="4">Cell membrane</location>
        <topology evidence="1">Multi-pass membrane protein</topology>
    </subcellularLocation>
</comment>
<comment type="similarity">
    <text evidence="2">Belongs to the G-protein coupled receptor 1 family.</text>
</comment>
<comment type="caution">
    <text evidence="4">This sequence may be the product of the translation of a non-canonical start GUG codon.</text>
</comment>
<comment type="online information" name="Human Olfactory Receptor Data Exploratorium (HORDE)">
    <link uri="http://genome.weizmann.ac.il/horde/card/index/symbol:OR8G3P"/>
</comment>
<accession>P0DMU2</accession>
<accession>Q15614</accession>
<accession>Q6IF38</accession>
<dbReference type="EMBL" id="AP000818">
    <property type="status" value="NOT_ANNOTATED_CDS"/>
    <property type="molecule type" value="Genomic_DNA"/>
</dbReference>
<dbReference type="EMBL" id="AP002965">
    <property type="status" value="NOT_ANNOTATED_CDS"/>
    <property type="molecule type" value="Genomic_DNA"/>
</dbReference>
<dbReference type="EMBL" id="FO680687">
    <property type="status" value="NOT_ANNOTATED_CDS"/>
    <property type="molecule type" value="Genomic_DNA"/>
</dbReference>
<dbReference type="EMBL" id="BK004424">
    <property type="protein sequence ID" value="DAA04822.1"/>
    <property type="molecule type" value="Genomic_DNA"/>
</dbReference>
<dbReference type="CCDS" id="CCDS91615.1"/>
<dbReference type="PIR" id="S58014">
    <property type="entry name" value="S58014"/>
</dbReference>
<dbReference type="SMR" id="P0DMU2"/>
<dbReference type="FunCoup" id="P0DMU2">
    <property type="interactions" value="46"/>
</dbReference>
<dbReference type="GlyCosmos" id="P0DMU2">
    <property type="glycosylation" value="1 site, No reported glycans"/>
</dbReference>
<dbReference type="GlyGen" id="P0DMU2">
    <property type="glycosylation" value="1 site"/>
</dbReference>
<dbReference type="BioMuta" id="HGNC:14698"/>
<dbReference type="MassIVE" id="P0DMU2"/>
<dbReference type="AGR" id="HGNC:14698"/>
<dbReference type="GeneCards" id="OR8G3"/>
<dbReference type="HGNC" id="HGNC:14698">
    <property type="gene designation" value="OR8G3"/>
</dbReference>
<dbReference type="neXtProt" id="NX_P0DMU2"/>
<dbReference type="InParanoid" id="P0DMU2"/>
<dbReference type="OrthoDB" id="9444602at2759"/>
<dbReference type="PAN-GO" id="P0DMU2">
    <property type="GO annotations" value="4 GO annotations based on evolutionary models"/>
</dbReference>
<dbReference type="PhylomeDB" id="P0DMU2"/>
<dbReference type="Pharos" id="P0DMU2">
    <property type="development level" value="Tdark"/>
</dbReference>
<dbReference type="Proteomes" id="UP000005640">
    <property type="component" value="Unplaced"/>
</dbReference>
<dbReference type="RNAct" id="P0DMU2">
    <property type="molecule type" value="protein"/>
</dbReference>
<dbReference type="GO" id="GO:0016020">
    <property type="term" value="C:membrane"/>
    <property type="evidence" value="ECO:0000303"/>
    <property type="project" value="UniProtKB"/>
</dbReference>
<dbReference type="GO" id="GO:0005886">
    <property type="term" value="C:plasma membrane"/>
    <property type="evidence" value="ECO:0007669"/>
    <property type="project" value="UniProtKB-SubCell"/>
</dbReference>
<dbReference type="GO" id="GO:0004930">
    <property type="term" value="F:G protein-coupled receptor activity"/>
    <property type="evidence" value="ECO:0007669"/>
    <property type="project" value="UniProtKB-KW"/>
</dbReference>
<dbReference type="GO" id="GO:0005549">
    <property type="term" value="F:odorant binding"/>
    <property type="evidence" value="ECO:0000318"/>
    <property type="project" value="GO_Central"/>
</dbReference>
<dbReference type="GO" id="GO:0004984">
    <property type="term" value="F:olfactory receptor activity"/>
    <property type="evidence" value="ECO:0000318"/>
    <property type="project" value="GO_Central"/>
</dbReference>
<dbReference type="GO" id="GO:0007186">
    <property type="term" value="P:G protein-coupled receptor signaling pathway"/>
    <property type="evidence" value="ECO:0000318"/>
    <property type="project" value="GO_Central"/>
</dbReference>
<dbReference type="GO" id="GO:0007608">
    <property type="term" value="P:sensory perception of smell"/>
    <property type="evidence" value="ECO:0000318"/>
    <property type="project" value="GO_Central"/>
</dbReference>
<dbReference type="FunFam" id="1.20.1070.10:FF:000004">
    <property type="entry name" value="Olfactory receptor"/>
    <property type="match status" value="1"/>
</dbReference>
<dbReference type="Gene3D" id="1.20.1070.10">
    <property type="entry name" value="Rhodopsin 7-helix transmembrane proteins"/>
    <property type="match status" value="1"/>
</dbReference>
<dbReference type="InterPro" id="IPR000276">
    <property type="entry name" value="GPCR_Rhodpsn"/>
</dbReference>
<dbReference type="InterPro" id="IPR017452">
    <property type="entry name" value="GPCR_Rhodpsn_7TM"/>
</dbReference>
<dbReference type="InterPro" id="IPR000725">
    <property type="entry name" value="Olfact_rcpt"/>
</dbReference>
<dbReference type="PANTHER" id="PTHR48018">
    <property type="entry name" value="OLFACTORY RECEPTOR"/>
    <property type="match status" value="1"/>
</dbReference>
<dbReference type="Pfam" id="PF13853">
    <property type="entry name" value="7tm_4"/>
    <property type="match status" value="1"/>
</dbReference>
<dbReference type="PRINTS" id="PR00237">
    <property type="entry name" value="GPCRRHODOPSN"/>
</dbReference>
<dbReference type="PRINTS" id="PR00245">
    <property type="entry name" value="OLFACTORYR"/>
</dbReference>
<dbReference type="SUPFAM" id="SSF81321">
    <property type="entry name" value="Family A G protein-coupled receptor-like"/>
    <property type="match status" value="1"/>
</dbReference>
<dbReference type="PROSITE" id="PS50262">
    <property type="entry name" value="G_PROTEIN_RECEP_F1_2"/>
    <property type="match status" value="1"/>
</dbReference>
<reference key="1">
    <citation type="journal article" date="2006" name="Nature">
        <title>Human chromosome 11 DNA sequence and analysis including novel gene identification.</title>
        <authorList>
            <person name="Taylor T.D."/>
            <person name="Noguchi H."/>
            <person name="Totoki Y."/>
            <person name="Toyoda A."/>
            <person name="Kuroki Y."/>
            <person name="Dewar K."/>
            <person name="Lloyd C."/>
            <person name="Itoh T."/>
            <person name="Takeda T."/>
            <person name="Kim D.-W."/>
            <person name="She X."/>
            <person name="Barlow K.F."/>
            <person name="Bloom T."/>
            <person name="Bruford E."/>
            <person name="Chang J.L."/>
            <person name="Cuomo C.A."/>
            <person name="Eichler E."/>
            <person name="FitzGerald M.G."/>
            <person name="Jaffe D.B."/>
            <person name="LaButti K."/>
            <person name="Nicol R."/>
            <person name="Park H.-S."/>
            <person name="Seaman C."/>
            <person name="Sougnez C."/>
            <person name="Yang X."/>
            <person name="Zimmer A.R."/>
            <person name="Zody M.C."/>
            <person name="Birren B.W."/>
            <person name="Nusbaum C."/>
            <person name="Fujiyama A."/>
            <person name="Hattori M."/>
            <person name="Rogers J."/>
            <person name="Lander E.S."/>
            <person name="Sakaki Y."/>
        </authorList>
    </citation>
    <scope>NUCLEOTIDE SEQUENCE [LARGE SCALE GENOMIC DNA]</scope>
</reference>
<reference key="2">
    <citation type="journal article" date="2004" name="Proc. Natl. Acad. Sci. U.S.A.">
        <title>The human olfactory receptor gene family.</title>
        <authorList>
            <person name="Malnic B."/>
            <person name="Godfrey P.A."/>
            <person name="Buck L.B."/>
        </authorList>
    </citation>
    <scope>IDENTIFICATION</scope>
</reference>
<reference key="3">
    <citation type="journal article" date="2004" name="Proc. Natl. Acad. Sci. U.S.A.">
        <authorList>
            <person name="Malnic B."/>
            <person name="Godfrey P.A."/>
            <person name="Buck L.B."/>
        </authorList>
    </citation>
    <scope>ERRATUM OF PUBMED:14983052</scope>
</reference>
<feature type="chain" id="PRO_0000150663" description="Olfactory receptor 8G3">
    <location>
        <begin position="1"/>
        <end position="310"/>
    </location>
</feature>
<feature type="topological domain" description="Extracellular" evidence="1">
    <location>
        <begin position="1"/>
        <end position="25"/>
    </location>
</feature>
<feature type="transmembrane region" description="Helical; Name=1" evidence="1">
    <location>
        <begin position="26"/>
        <end position="46"/>
    </location>
</feature>
<feature type="topological domain" description="Cytoplasmic" evidence="1">
    <location>
        <begin position="47"/>
        <end position="54"/>
    </location>
</feature>
<feature type="transmembrane region" description="Helical; Name=2" evidence="1">
    <location>
        <begin position="55"/>
        <end position="75"/>
    </location>
</feature>
<feature type="topological domain" description="Extracellular" evidence="1">
    <location>
        <begin position="76"/>
        <end position="99"/>
    </location>
</feature>
<feature type="transmembrane region" description="Helical; Name=3" evidence="1">
    <location>
        <begin position="100"/>
        <end position="120"/>
    </location>
</feature>
<feature type="topological domain" description="Cytoplasmic" evidence="1">
    <location>
        <begin position="121"/>
        <end position="139"/>
    </location>
</feature>
<feature type="transmembrane region" description="Helical; Name=4" evidence="1">
    <location>
        <begin position="140"/>
        <end position="160"/>
    </location>
</feature>
<feature type="topological domain" description="Extracellular" evidence="1">
    <location>
        <begin position="161"/>
        <end position="197"/>
    </location>
</feature>
<feature type="transmembrane region" description="Helical; Name=5" evidence="1">
    <location>
        <begin position="198"/>
        <end position="217"/>
    </location>
</feature>
<feature type="topological domain" description="Cytoplasmic" evidence="1">
    <location>
        <begin position="218"/>
        <end position="237"/>
    </location>
</feature>
<feature type="transmembrane region" description="Helical; Name=6" evidence="1">
    <location>
        <begin position="238"/>
        <end position="258"/>
    </location>
</feature>
<feature type="topological domain" description="Extracellular" evidence="1">
    <location>
        <begin position="259"/>
        <end position="271"/>
    </location>
</feature>
<feature type="transmembrane region" description="Helical; Name=7" evidence="1">
    <location>
        <begin position="272"/>
        <end position="292"/>
    </location>
</feature>
<feature type="topological domain" description="Cytoplasmic" evidence="1">
    <location>
        <begin position="293"/>
        <end position="310"/>
    </location>
</feature>
<feature type="glycosylation site" description="N-linked (GlcNAc...) asparagine" evidence="1">
    <location>
        <position position="5"/>
    </location>
</feature>
<feature type="disulfide bond" evidence="2">
    <location>
        <begin position="97"/>
        <end position="189"/>
    </location>
</feature>
<evidence type="ECO:0000255" key="1"/>
<evidence type="ECO:0000255" key="2">
    <source>
        <dbReference type="PROSITE-ProRule" id="PRU00521"/>
    </source>
</evidence>
<evidence type="ECO:0000303" key="3">
    <source>
    </source>
</evidence>
<evidence type="ECO:0000305" key="4"/>
<evidence type="ECO:0000312" key="5">
    <source>
        <dbReference type="HGNC" id="HGNC:14698"/>
    </source>
</evidence>
<keyword id="KW-1003">Cell membrane</keyword>
<keyword id="KW-1015">Disulfide bond</keyword>
<keyword id="KW-0297">G-protein coupled receptor</keyword>
<keyword id="KW-0325">Glycoprotein</keyword>
<keyword id="KW-0472">Membrane</keyword>
<keyword id="KW-0552">Olfaction</keyword>
<keyword id="KW-0675">Receptor</keyword>
<keyword id="KW-1185">Reference proteome</keyword>
<keyword id="KW-0716">Sensory transduction</keyword>
<keyword id="KW-0807">Transducer</keyword>
<keyword id="KW-0812">Transmembrane</keyword>
<keyword id="KW-1133">Transmembrane helix</keyword>